<evidence type="ECO:0000255" key="1">
    <source>
        <dbReference type="HAMAP-Rule" id="MF_00038"/>
    </source>
</evidence>
<gene>
    <name evidence="1" type="primary">mraY</name>
    <name type="ordered locus">RBAM_015050</name>
</gene>
<accession>A7Z4E2</accession>
<protein>
    <recommendedName>
        <fullName evidence="1">Phospho-N-acetylmuramoyl-pentapeptide-transferase</fullName>
        <ecNumber evidence="1">2.7.8.13</ecNumber>
    </recommendedName>
    <alternativeName>
        <fullName evidence="1">UDP-MurNAc-pentapeptide phosphotransferase</fullName>
    </alternativeName>
</protein>
<feature type="chain" id="PRO_1000002937" description="Phospho-N-acetylmuramoyl-pentapeptide-transferase">
    <location>
        <begin position="1"/>
        <end position="324"/>
    </location>
</feature>
<feature type="transmembrane region" description="Helical" evidence="1">
    <location>
        <begin position="5"/>
        <end position="25"/>
    </location>
</feature>
<feature type="transmembrane region" description="Helical" evidence="1">
    <location>
        <begin position="50"/>
        <end position="70"/>
    </location>
</feature>
<feature type="transmembrane region" description="Helical" evidence="1">
    <location>
        <begin position="77"/>
        <end position="97"/>
    </location>
</feature>
<feature type="transmembrane region" description="Helical" evidence="1">
    <location>
        <begin position="117"/>
        <end position="137"/>
    </location>
</feature>
<feature type="transmembrane region" description="Helical" evidence="1">
    <location>
        <begin position="147"/>
        <end position="167"/>
    </location>
</feature>
<feature type="transmembrane region" description="Helical" evidence="1">
    <location>
        <begin position="176"/>
        <end position="196"/>
    </location>
</feature>
<feature type="transmembrane region" description="Helical" evidence="1">
    <location>
        <begin position="203"/>
        <end position="223"/>
    </location>
</feature>
<feature type="transmembrane region" description="Helical" evidence="1">
    <location>
        <begin position="227"/>
        <end position="247"/>
    </location>
</feature>
<feature type="transmembrane region" description="Helical" evidence="1">
    <location>
        <begin position="250"/>
        <end position="270"/>
    </location>
</feature>
<feature type="transmembrane region" description="Helical" evidence="1">
    <location>
        <begin position="302"/>
        <end position="322"/>
    </location>
</feature>
<proteinExistence type="inferred from homology"/>
<comment type="function">
    <text evidence="1">Catalyzes the initial step of the lipid cycle reactions in the biosynthesis of the cell wall peptidoglycan: transfers peptidoglycan precursor phospho-MurNAc-pentapeptide from UDP-MurNAc-pentapeptide onto the lipid carrier undecaprenyl phosphate, yielding undecaprenyl-pyrophosphoryl-MurNAc-pentapeptide, known as lipid I.</text>
</comment>
<comment type="catalytic activity">
    <reaction evidence="1">
        <text>UDP-N-acetyl-alpha-D-muramoyl-L-alanyl-gamma-D-glutamyl-meso-2,6-diaminopimeloyl-D-alanyl-D-alanine + di-trans,octa-cis-undecaprenyl phosphate = di-trans,octa-cis-undecaprenyl diphospho-N-acetyl-alpha-D-muramoyl-L-alanyl-D-glutamyl-meso-2,6-diaminopimeloyl-D-alanyl-D-alanine + UMP</text>
        <dbReference type="Rhea" id="RHEA:28386"/>
        <dbReference type="ChEBI" id="CHEBI:57865"/>
        <dbReference type="ChEBI" id="CHEBI:60392"/>
        <dbReference type="ChEBI" id="CHEBI:61386"/>
        <dbReference type="ChEBI" id="CHEBI:61387"/>
        <dbReference type="EC" id="2.7.8.13"/>
    </reaction>
</comment>
<comment type="cofactor">
    <cofactor evidence="1">
        <name>Mg(2+)</name>
        <dbReference type="ChEBI" id="CHEBI:18420"/>
    </cofactor>
</comment>
<comment type="pathway">
    <text evidence="1">Cell wall biogenesis; peptidoglycan biosynthesis.</text>
</comment>
<comment type="subcellular location">
    <subcellularLocation>
        <location evidence="1">Cell membrane</location>
        <topology evidence="1">Multi-pass membrane protein</topology>
    </subcellularLocation>
</comment>
<comment type="similarity">
    <text evidence="1">Belongs to the glycosyltransferase 4 family. MraY subfamily.</text>
</comment>
<organism>
    <name type="scientific">Bacillus velezensis (strain DSM 23117 / BGSC 10A6 / LMG 26770 / FZB42)</name>
    <name type="common">Bacillus amyloliquefaciens subsp. plantarum</name>
    <dbReference type="NCBI Taxonomy" id="326423"/>
    <lineage>
        <taxon>Bacteria</taxon>
        <taxon>Bacillati</taxon>
        <taxon>Bacillota</taxon>
        <taxon>Bacilli</taxon>
        <taxon>Bacillales</taxon>
        <taxon>Bacillaceae</taxon>
        <taxon>Bacillus</taxon>
        <taxon>Bacillus amyloliquefaciens group</taxon>
    </lineage>
</organism>
<dbReference type="EC" id="2.7.8.13" evidence="1"/>
<dbReference type="EMBL" id="CP000560">
    <property type="protein sequence ID" value="ABS73868.1"/>
    <property type="molecule type" value="Genomic_DNA"/>
</dbReference>
<dbReference type="RefSeq" id="WP_007409707.1">
    <property type="nucleotide sequence ID" value="NC_009725.2"/>
</dbReference>
<dbReference type="SMR" id="A7Z4E2"/>
<dbReference type="GeneID" id="93080638"/>
<dbReference type="KEGG" id="bay:RBAM_015050"/>
<dbReference type="HOGENOM" id="CLU_023982_0_1_9"/>
<dbReference type="UniPathway" id="UPA00219"/>
<dbReference type="Proteomes" id="UP000001120">
    <property type="component" value="Chromosome"/>
</dbReference>
<dbReference type="GO" id="GO:0005886">
    <property type="term" value="C:plasma membrane"/>
    <property type="evidence" value="ECO:0007669"/>
    <property type="project" value="UniProtKB-SubCell"/>
</dbReference>
<dbReference type="GO" id="GO:0046872">
    <property type="term" value="F:metal ion binding"/>
    <property type="evidence" value="ECO:0007669"/>
    <property type="project" value="UniProtKB-KW"/>
</dbReference>
<dbReference type="GO" id="GO:0008963">
    <property type="term" value="F:phospho-N-acetylmuramoyl-pentapeptide-transferase activity"/>
    <property type="evidence" value="ECO:0007669"/>
    <property type="project" value="UniProtKB-UniRule"/>
</dbReference>
<dbReference type="GO" id="GO:0051992">
    <property type="term" value="F:UDP-N-acetylmuramoyl-L-alanyl-D-glutamyl-meso-2,6-diaminopimelyl-D-alanyl-D-alanine:undecaprenyl-phosphate transferase activity"/>
    <property type="evidence" value="ECO:0007669"/>
    <property type="project" value="RHEA"/>
</dbReference>
<dbReference type="GO" id="GO:0051301">
    <property type="term" value="P:cell division"/>
    <property type="evidence" value="ECO:0007669"/>
    <property type="project" value="UniProtKB-KW"/>
</dbReference>
<dbReference type="GO" id="GO:0071555">
    <property type="term" value="P:cell wall organization"/>
    <property type="evidence" value="ECO:0007669"/>
    <property type="project" value="UniProtKB-KW"/>
</dbReference>
<dbReference type="GO" id="GO:0009252">
    <property type="term" value="P:peptidoglycan biosynthetic process"/>
    <property type="evidence" value="ECO:0007669"/>
    <property type="project" value="UniProtKB-UniRule"/>
</dbReference>
<dbReference type="GO" id="GO:0008360">
    <property type="term" value="P:regulation of cell shape"/>
    <property type="evidence" value="ECO:0007669"/>
    <property type="project" value="UniProtKB-KW"/>
</dbReference>
<dbReference type="CDD" id="cd06852">
    <property type="entry name" value="GT_MraY"/>
    <property type="match status" value="1"/>
</dbReference>
<dbReference type="HAMAP" id="MF_00038">
    <property type="entry name" value="MraY"/>
    <property type="match status" value="1"/>
</dbReference>
<dbReference type="InterPro" id="IPR000715">
    <property type="entry name" value="Glycosyl_transferase_4"/>
</dbReference>
<dbReference type="InterPro" id="IPR003524">
    <property type="entry name" value="PNAcMuramoyl-5peptid_Trfase"/>
</dbReference>
<dbReference type="InterPro" id="IPR018480">
    <property type="entry name" value="PNAcMuramoyl-5peptid_Trfase_CS"/>
</dbReference>
<dbReference type="NCBIfam" id="TIGR00445">
    <property type="entry name" value="mraY"/>
    <property type="match status" value="1"/>
</dbReference>
<dbReference type="PANTHER" id="PTHR22926">
    <property type="entry name" value="PHOSPHO-N-ACETYLMURAMOYL-PENTAPEPTIDE-TRANSFERASE"/>
    <property type="match status" value="1"/>
</dbReference>
<dbReference type="PANTHER" id="PTHR22926:SF5">
    <property type="entry name" value="PHOSPHO-N-ACETYLMURAMOYL-PENTAPEPTIDE-TRANSFERASE HOMOLOG"/>
    <property type="match status" value="1"/>
</dbReference>
<dbReference type="Pfam" id="PF00953">
    <property type="entry name" value="Glycos_transf_4"/>
    <property type="match status" value="1"/>
</dbReference>
<dbReference type="Pfam" id="PF10555">
    <property type="entry name" value="MraY_sig1"/>
    <property type="match status" value="1"/>
</dbReference>
<dbReference type="PROSITE" id="PS01347">
    <property type="entry name" value="MRAY_1"/>
    <property type="match status" value="1"/>
</dbReference>
<dbReference type="PROSITE" id="PS01348">
    <property type="entry name" value="MRAY_2"/>
    <property type="match status" value="1"/>
</dbReference>
<keyword id="KW-0131">Cell cycle</keyword>
<keyword id="KW-0132">Cell division</keyword>
<keyword id="KW-1003">Cell membrane</keyword>
<keyword id="KW-0133">Cell shape</keyword>
<keyword id="KW-0961">Cell wall biogenesis/degradation</keyword>
<keyword id="KW-0460">Magnesium</keyword>
<keyword id="KW-0472">Membrane</keyword>
<keyword id="KW-0479">Metal-binding</keyword>
<keyword id="KW-0573">Peptidoglycan synthesis</keyword>
<keyword id="KW-0808">Transferase</keyword>
<keyword id="KW-0812">Transmembrane</keyword>
<keyword id="KW-1133">Transmembrane helix</keyword>
<name>MRAY_BACVZ</name>
<reference key="1">
    <citation type="journal article" date="2007" name="Nat. Biotechnol.">
        <title>Comparative analysis of the complete genome sequence of the plant growth-promoting bacterium Bacillus amyloliquefaciens FZB42.</title>
        <authorList>
            <person name="Chen X.H."/>
            <person name="Koumoutsi A."/>
            <person name="Scholz R."/>
            <person name="Eisenreich A."/>
            <person name="Schneider K."/>
            <person name="Heinemeyer I."/>
            <person name="Morgenstern B."/>
            <person name="Voss B."/>
            <person name="Hess W.R."/>
            <person name="Reva O."/>
            <person name="Junge H."/>
            <person name="Voigt B."/>
            <person name="Jungblut P.R."/>
            <person name="Vater J."/>
            <person name="Suessmuth R."/>
            <person name="Liesegang H."/>
            <person name="Strittmatter A."/>
            <person name="Gottschalk G."/>
            <person name="Borriss R."/>
        </authorList>
    </citation>
    <scope>NUCLEOTIDE SEQUENCE [LARGE SCALE GENOMIC DNA]</scope>
    <source>
        <strain>DSM 23117 / BGSC 10A6 / LMG 26770 / FZB42</strain>
    </source>
</reference>
<sequence>MLEQVILFTIIMGFLISVLISPILIPFLRRLKFGQSIREEGPKSHMKKSGTPTMGGVMIIVSIAITAIVMTQKFSHLSAEMFLLLFVTIGYGLLGFLDDYIKVVMKRNLGLTSKQKLIGQIIIAIVFYGVYHYCHFSTGIRVPGTHLSIDLGWGYFILVLFMLVGGSNAVNLTDGLDGLLSGTAAIAFGAFAILAWNQSQYDVAIFSVAVVGAVLGFLVFNAHPAKVFMGDTGSLALGGAIVTVAILTKLEILLVIIGGVFVIETLSVILQVISFKTTGKRIFKMSPLHHHYELVGWSEWRVVVTFWTAGLLLAVLGIYIEVWL</sequence>